<sequence length="270" mass="29625">MHALGRIPTLTLLIFINIFVSGSSCTDENQTIQNDSSSSLTQVNTTMSVQMDKKALLCCFSSPLINAVLITWIIKHRHLPSCTIAYNLDKKTNETSCLGRNITWASTPDHSPELQISAVALQHEGTYTCEIVTPEGNLEKVYDLQVLVPPEVTYFPGKNRTAVCEAMAGKPAAQISWTPDGDCVTKSESHSNGTVTVRSTCHWEQNNVSVVSCLVSHSTGNQSLSIELSQGTMTTPRSLLTILYVKMALLVIILLNVGFAFFQKRNFART</sequence>
<evidence type="ECO:0000255" key="1"/>
<evidence type="ECO:0000255" key="2">
    <source>
        <dbReference type="PROSITE-ProRule" id="PRU00114"/>
    </source>
</evidence>
<evidence type="ECO:0000269" key="3">
    <source>
    </source>
</evidence>
<evidence type="ECO:0000269" key="4">
    <source>
    </source>
</evidence>
<evidence type="ECO:0000269" key="5">
    <source>
    </source>
</evidence>
<evidence type="ECO:0000269" key="6">
    <source>
    </source>
</evidence>
<evidence type="ECO:0000269" key="7">
    <source>
    </source>
</evidence>
<evidence type="ECO:0000269" key="8">
    <source>
    </source>
</evidence>
<evidence type="ECO:0000305" key="9"/>
<evidence type="ECO:0000305" key="10">
    <source>
    </source>
</evidence>
<evidence type="ECO:0000305" key="11">
    <source>
    </source>
</evidence>
<evidence type="ECO:0000305" key="12">
    <source>
    </source>
</evidence>
<evidence type="ECO:0007829" key="13">
    <source>
        <dbReference type="PDB" id="4BFE"/>
    </source>
</evidence>
<proteinExistence type="evidence at protein level"/>
<feature type="signal peptide" evidence="1">
    <location>
        <begin position="1"/>
        <end position="25"/>
    </location>
</feature>
<feature type="chain" id="PRO_0000346454" description="Cell surface glycoprotein CD200 receptor 4">
    <location>
        <begin position="26"/>
        <end position="270"/>
    </location>
</feature>
<feature type="topological domain" description="Extracellular" evidence="1">
    <location>
        <begin position="26"/>
        <end position="241"/>
    </location>
</feature>
<feature type="transmembrane region" description="Helical" evidence="1">
    <location>
        <begin position="242"/>
        <end position="262"/>
    </location>
</feature>
<feature type="topological domain" description="Cytoplasmic" evidence="1">
    <location>
        <begin position="263"/>
        <end position="270"/>
    </location>
</feature>
<feature type="domain" description="Ig-like V-type">
    <location>
        <begin position="26"/>
        <end position="145"/>
    </location>
</feature>
<feature type="domain" description="Ig-like C2-type">
    <location>
        <begin position="134"/>
        <end position="229"/>
    </location>
</feature>
<feature type="glycosylation site" description="N-linked (GlcNAc...) asparagine" evidence="1">
    <location>
        <position position="29"/>
    </location>
</feature>
<feature type="glycosylation site" description="N-linked (GlcNAc...) asparagine" evidence="1">
    <location>
        <position position="44"/>
    </location>
</feature>
<feature type="glycosylation site" description="N-linked (GlcNAc...) asparagine" evidence="1">
    <location>
        <position position="192"/>
    </location>
</feature>
<feature type="disulfide bond" evidence="2 8">
    <location>
        <begin position="58"/>
        <end position="129"/>
    </location>
</feature>
<feature type="disulfide bond" evidence="2 8">
    <location>
        <begin position="82"/>
        <end position="97"/>
    </location>
</feature>
<feature type="disulfide bond" evidence="2 8">
    <location>
        <begin position="164"/>
        <end position="213"/>
    </location>
</feature>
<feature type="disulfide bond" evidence="2 8">
    <location>
        <begin position="183"/>
        <end position="201"/>
    </location>
</feature>
<feature type="mutagenesis site" description="Acquires binding to CD200; when associated with T-90 and F-138." evidence="8">
    <original>N</original>
    <variation>K</variation>
    <location>
        <position position="87"/>
    </location>
</feature>
<feature type="mutagenesis site" description="Acquires binding to CD200; when associated with K-87 and F-138." evidence="8">
    <original>K</original>
    <variation>T</variation>
    <location>
        <position position="90"/>
    </location>
</feature>
<feature type="mutagenesis site" description="Acquires binding to CD200; when associated with K-87 and T-90." evidence="8">
    <original>L</original>
    <variation>F</variation>
    <location>
        <position position="138"/>
    </location>
</feature>
<feature type="strand" evidence="13">
    <location>
        <begin position="45"/>
        <end position="50"/>
    </location>
</feature>
<feature type="strand" evidence="13">
    <location>
        <begin position="55"/>
        <end position="58"/>
    </location>
</feature>
<feature type="strand" evidence="13">
    <location>
        <begin position="68"/>
        <end position="75"/>
    </location>
</feature>
<feature type="strand" evidence="13">
    <location>
        <begin position="77"/>
        <end position="79"/>
    </location>
</feature>
<feature type="strand" evidence="13">
    <location>
        <begin position="82"/>
        <end position="87"/>
    </location>
</feature>
<feature type="turn" evidence="13">
    <location>
        <begin position="88"/>
        <end position="91"/>
    </location>
</feature>
<feature type="strand" evidence="13">
    <location>
        <begin position="92"/>
        <end position="96"/>
    </location>
</feature>
<feature type="turn" evidence="13">
    <location>
        <begin position="98"/>
        <end position="101"/>
    </location>
</feature>
<feature type="strand" evidence="13">
    <location>
        <begin position="102"/>
        <end position="107"/>
    </location>
</feature>
<feature type="strand" evidence="13">
    <location>
        <begin position="109"/>
        <end position="111"/>
    </location>
</feature>
<feature type="strand" evidence="13">
    <location>
        <begin position="113"/>
        <end position="118"/>
    </location>
</feature>
<feature type="helix" evidence="13">
    <location>
        <begin position="121"/>
        <end position="123"/>
    </location>
</feature>
<feature type="strand" evidence="13">
    <location>
        <begin position="125"/>
        <end position="133"/>
    </location>
</feature>
<feature type="strand" evidence="13">
    <location>
        <begin position="136"/>
        <end position="148"/>
    </location>
</feature>
<feature type="strand" evidence="13">
    <location>
        <begin position="151"/>
        <end position="156"/>
    </location>
</feature>
<feature type="strand" evidence="13">
    <location>
        <begin position="158"/>
        <end position="171"/>
    </location>
</feature>
<feature type="strand" evidence="13">
    <location>
        <begin position="174"/>
        <end position="179"/>
    </location>
</feature>
<feature type="strand" evidence="13">
    <location>
        <begin position="182"/>
        <end position="189"/>
    </location>
</feature>
<feature type="strand" evidence="13">
    <location>
        <begin position="195"/>
        <end position="202"/>
    </location>
</feature>
<feature type="strand" evidence="13">
    <location>
        <begin position="210"/>
        <end position="216"/>
    </location>
</feature>
<feature type="strand" evidence="13">
    <location>
        <begin position="222"/>
        <end position="227"/>
    </location>
</feature>
<keyword id="KW-0002">3D-structure</keyword>
<keyword id="KW-1015">Disulfide bond</keyword>
<keyword id="KW-0325">Glycoprotein</keyword>
<keyword id="KW-0393">Immunoglobulin domain</keyword>
<keyword id="KW-0472">Membrane</keyword>
<keyword id="KW-0675">Receptor</keyword>
<keyword id="KW-1185">Reference proteome</keyword>
<keyword id="KW-0677">Repeat</keyword>
<keyword id="KW-0732">Signal</keyword>
<keyword id="KW-0812">Transmembrane</keyword>
<keyword id="KW-1133">Transmembrane helix</keyword>
<gene>
    <name type="primary">Cd200r4</name>
</gene>
<comment type="function">
    <text evidence="3 4 6 7">Involved in the recruitment or surface expression of the TYROBP receptor.</text>
</comment>
<comment type="subunit">
    <text evidence="3">Interacts with TYROBP.</text>
</comment>
<comment type="subcellular location">
    <subcellularLocation>
        <location evidence="9">Membrane</location>
        <topology evidence="9">Single-pass type I membrane protein</topology>
    </subcellularLocation>
</comment>
<comment type="tissue specificity">
    <text evidence="3 4 5">Highly expressed in monocytes, NK cells and a subset of NKT cells. Weakly expressed in granulocytes and B-cells (at protein level). Expressed in brain, lung, testis, thymus, intestine and uterus. Expressed in bone marrow derived-macrophage and dendritic cells and mast cells.</text>
</comment>
<comment type="similarity">
    <text evidence="9">Belongs to the CD200R family.</text>
</comment>
<comment type="caution">
    <text evidence="10 11">May be expressed in adult splenic cells (PubMed:15187158), as the antibody used could not discriminate between CD200R1 and CD200R4. May be expressed in uterus at 12.5 dpc (at protein level) (PubMed:15274657), as the antibody used could not discriminate between CD200R1 and CD200R4.</text>
</comment>
<comment type="caution">
    <text evidence="10 12">According to some authors (PubMed:15187158), CD200R4 is a receptor for the CD200/OX2 cell surface glycoprotein, but it was later found (PubMed:23602662) to miss key amino-acids for binding to CD200.</text>
</comment>
<organism>
    <name type="scientific">Mus musculus</name>
    <name type="common">Mouse</name>
    <dbReference type="NCBI Taxonomy" id="10090"/>
    <lineage>
        <taxon>Eukaryota</taxon>
        <taxon>Metazoa</taxon>
        <taxon>Chordata</taxon>
        <taxon>Craniata</taxon>
        <taxon>Vertebrata</taxon>
        <taxon>Euteleostomi</taxon>
        <taxon>Mammalia</taxon>
        <taxon>Eutheria</taxon>
        <taxon>Euarchontoglires</taxon>
        <taxon>Glires</taxon>
        <taxon>Rodentia</taxon>
        <taxon>Myomorpha</taxon>
        <taxon>Muroidea</taxon>
        <taxon>Muridae</taxon>
        <taxon>Murinae</taxon>
        <taxon>Mus</taxon>
        <taxon>Mus</taxon>
    </lineage>
</organism>
<reference key="1">
    <citation type="journal article" date="2003" name="J. Immunol.">
        <title>Characterization of the CD200 receptor family in mice and humans and their interactions with CD200.</title>
        <authorList>
            <person name="Wright G.J."/>
            <person name="Cherwinski H."/>
            <person name="Foster-Cuevas M."/>
            <person name="Brooke G."/>
            <person name="Puklavec M.J."/>
            <person name="Bigler M."/>
            <person name="Song Y."/>
            <person name="Jenmalm M."/>
            <person name="Gorman D."/>
            <person name="McClanahan T."/>
            <person name="Liu M.-R."/>
            <person name="Brown M.H."/>
            <person name="Sedgwick J.D."/>
            <person name="Phillips J.H."/>
            <person name="Barclay A.N."/>
        </authorList>
    </citation>
    <scope>NUCLEOTIDE SEQUENCE [MRNA]</scope>
    <scope>FUNCTION</scope>
    <scope>SUBUNIT</scope>
    <scope>TISSUE SPECIFICITY</scope>
</reference>
<reference key="2">
    <citation type="journal article" date="2004" name="J. Immunol.">
        <title>CD200 is a ligand for all members of the CD200R family of immunoregulatory molecules.</title>
        <authorList>
            <person name="Gorczynski R."/>
            <person name="Chen Z."/>
            <person name="Kai Y."/>
            <person name="Lee L."/>
            <person name="Wong S."/>
            <person name="Marsden P.A."/>
        </authorList>
    </citation>
    <scope>NUCLEOTIDE SEQUENCE [MRNA]</scope>
    <scope>FUNCTION</scope>
    <scope>TISSUE SPECIFICITY</scope>
    <source>
        <strain>C57BL/6J</strain>
    </source>
</reference>
<reference key="3">
    <citation type="journal article" date="2004" name="Genome Res.">
        <title>The status, quality, and expansion of the NIH full-length cDNA project: the Mammalian Gene Collection (MGC).</title>
        <authorList>
            <consortium name="The MGC Project Team"/>
        </authorList>
    </citation>
    <scope>NUCLEOTIDE SEQUENCE [LARGE SCALE MRNA]</scope>
    <source>
        <tissue>Brain</tissue>
    </source>
</reference>
<reference key="4">
    <citation type="journal article" date="2004" name="J. Biol. Chem.">
        <title>CD200 receptor family members represent novel DAP12-associated activating receptors on basophils and mast cells.</title>
        <authorList>
            <person name="Voehringer D."/>
            <person name="Rosen D.B."/>
            <person name="Lanier L.L."/>
            <person name="Locksley R.M."/>
        </authorList>
    </citation>
    <scope>FUNCTION</scope>
    <source>
        <strain>BALB/cJ</strain>
    </source>
</reference>
<reference key="5">
    <citation type="journal article" date="2004" name="Am. J. Reprod. Immunol.">
        <title>Structural and functional heterogeneity in the CD200R family of immunoregulatory molecules and their expression at the feto-maternal interface.</title>
        <authorList>
            <person name="Gorczynski R.M."/>
            <person name="Chen Z."/>
            <person name="Clark D.A."/>
            <person name="Kai Y."/>
            <person name="Lee L."/>
            <person name="Nachman J."/>
            <person name="Wong S."/>
            <person name="Marsden P."/>
        </authorList>
    </citation>
    <scope>IDENTIFICATION</scope>
    <scope>TISSUE SPECIFICITY</scope>
</reference>
<reference key="6">
    <citation type="journal article" date="2005" name="J. Immunol.">
        <title>Recombinant CD200 protein does not bind activating proteins closely related to CD200 receptor.</title>
        <authorList>
            <person name="Hatherley D."/>
            <person name="Cherwinski H.M."/>
            <person name="Moshref M."/>
            <person name="Barclay A.N."/>
        </authorList>
    </citation>
    <scope>FUNCTION</scope>
</reference>
<reference key="7">
    <citation type="journal article" date="2013" name="Structure">
        <title>Structures of CD200/CD200 receptor family and implications for topology, regulation, and evolution.</title>
        <authorList>
            <person name="Hatherley D."/>
            <person name="Lea S.M."/>
            <person name="Johnson S."/>
            <person name="Barclay A.N."/>
        </authorList>
    </citation>
    <scope>X-RAY CRYSTALLOGRAPHY (2.5 ANGSTROMS) OF 26-238</scope>
    <scope>DISULFIDE BONDS</scope>
    <scope>MUTAGENESIS OF ASN-87; LYS-90 AND LEU-138</scope>
</reference>
<dbReference type="EMBL" id="AY230200">
    <property type="protein sequence ID" value="AAO84054.1"/>
    <property type="molecule type" value="mRNA"/>
</dbReference>
<dbReference type="EMBL" id="BC131946">
    <property type="protein sequence ID" value="AAI31947.1"/>
    <property type="molecule type" value="mRNA"/>
</dbReference>
<dbReference type="EMBL" id="BC131972">
    <property type="protein sequence ID" value="AAI31973.1"/>
    <property type="molecule type" value="mRNA"/>
</dbReference>
<dbReference type="CCDS" id="CCDS37346.1"/>
<dbReference type="RefSeq" id="NP_997127.1">
    <property type="nucleotide sequence ID" value="NM_207244.3"/>
</dbReference>
<dbReference type="RefSeq" id="XP_006522191.1">
    <property type="nucleotide sequence ID" value="XM_006522128.2"/>
</dbReference>
<dbReference type="RefSeq" id="XP_006522192.1">
    <property type="nucleotide sequence ID" value="XM_006522129.2"/>
</dbReference>
<dbReference type="RefSeq" id="XP_006522193.1">
    <property type="nucleotide sequence ID" value="XM_006522130.2"/>
</dbReference>
<dbReference type="PDB" id="4BFE">
    <property type="method" value="X-ray"/>
    <property type="resolution" value="2.50 A"/>
    <property type="chains" value="A/B/C=26-238"/>
</dbReference>
<dbReference type="PDBsum" id="4BFE"/>
<dbReference type="SMR" id="Q6XJV4"/>
<dbReference type="DIP" id="DIP-60158N"/>
<dbReference type="FunCoup" id="Q6XJV4">
    <property type="interactions" value="541"/>
</dbReference>
<dbReference type="IntAct" id="Q6XJV4">
    <property type="interactions" value="1"/>
</dbReference>
<dbReference type="STRING" id="10090.ENSMUSP00000135299"/>
<dbReference type="GlyCosmos" id="Q6XJV4">
    <property type="glycosylation" value="3 sites, No reported glycans"/>
</dbReference>
<dbReference type="GlyGen" id="Q6XJV4">
    <property type="glycosylation" value="3 sites"/>
</dbReference>
<dbReference type="PaxDb" id="10090-ENSMUSP00000135299"/>
<dbReference type="ProteomicsDB" id="295573"/>
<dbReference type="DNASU" id="239849"/>
<dbReference type="Ensembl" id="ENSMUST00000114626.4">
    <property type="protein sequence ID" value="ENSMUSP00000110273.4"/>
    <property type="gene ID" value="ENSMUSG00000062082.17"/>
</dbReference>
<dbReference type="Ensembl" id="ENSMUST00000176819.8">
    <property type="protein sequence ID" value="ENSMUSP00000135299.2"/>
    <property type="gene ID" value="ENSMUSG00000062082.17"/>
</dbReference>
<dbReference type="GeneID" id="239849"/>
<dbReference type="KEGG" id="mmu:239849"/>
<dbReference type="UCSC" id="uc007zht.1">
    <property type="organism name" value="mouse"/>
</dbReference>
<dbReference type="AGR" id="MGI:3036289"/>
<dbReference type="CTD" id="239849"/>
<dbReference type="MGI" id="MGI:3036289">
    <property type="gene designation" value="Cd200r4"/>
</dbReference>
<dbReference type="VEuPathDB" id="HostDB:ENSMUSG00000062082"/>
<dbReference type="eggNOG" id="ENOG502S9IV">
    <property type="taxonomic scope" value="Eukaryota"/>
</dbReference>
<dbReference type="GeneTree" id="ENSGT00390000014496"/>
<dbReference type="InParanoid" id="Q6XJV4"/>
<dbReference type="OMA" id="NERITWE"/>
<dbReference type="OrthoDB" id="8915654at2759"/>
<dbReference type="PhylomeDB" id="Q6XJV4"/>
<dbReference type="TreeFam" id="TF335960"/>
<dbReference type="BioGRID-ORCS" id="239849">
    <property type="hits" value="0 hits in 45 CRISPR screens"/>
</dbReference>
<dbReference type="ChiTaRS" id="Cd200r4">
    <property type="organism name" value="mouse"/>
</dbReference>
<dbReference type="EvolutionaryTrace" id="Q6XJV4"/>
<dbReference type="PRO" id="PR:Q6XJV4"/>
<dbReference type="Proteomes" id="UP000000589">
    <property type="component" value="Chromosome 16"/>
</dbReference>
<dbReference type="RNAct" id="Q6XJV4">
    <property type="molecule type" value="protein"/>
</dbReference>
<dbReference type="Bgee" id="ENSMUSG00000062082">
    <property type="expression patterns" value="Expressed in vault of skull and 32 other cell types or tissues"/>
</dbReference>
<dbReference type="ExpressionAtlas" id="Q6XJV4">
    <property type="expression patterns" value="baseline and differential"/>
</dbReference>
<dbReference type="GO" id="GO:0009897">
    <property type="term" value="C:external side of plasma membrane"/>
    <property type="evidence" value="ECO:0000314"/>
    <property type="project" value="MGI"/>
</dbReference>
<dbReference type="GO" id="GO:0038023">
    <property type="term" value="F:signaling receptor activity"/>
    <property type="evidence" value="ECO:0000314"/>
    <property type="project" value="MGI"/>
</dbReference>
<dbReference type="GO" id="GO:0150077">
    <property type="term" value="P:regulation of neuroinflammatory response"/>
    <property type="evidence" value="ECO:0007669"/>
    <property type="project" value="InterPro"/>
</dbReference>
<dbReference type="CDD" id="cd20985">
    <property type="entry name" value="IgV_CD200R-like"/>
    <property type="match status" value="1"/>
</dbReference>
<dbReference type="FunFam" id="2.60.40.10:FF:000584">
    <property type="entry name" value="Cell surface glycoprotein CD200 receptor 1"/>
    <property type="match status" value="1"/>
</dbReference>
<dbReference type="FunFam" id="2.60.40.10:FF:000769">
    <property type="entry name" value="Cell surface glycoprotein CD200 receptor 1"/>
    <property type="match status" value="1"/>
</dbReference>
<dbReference type="Gene3D" id="2.60.40.10">
    <property type="entry name" value="Immunoglobulins"/>
    <property type="match status" value="2"/>
</dbReference>
<dbReference type="InterPro" id="IPR040012">
    <property type="entry name" value="CD200R"/>
</dbReference>
<dbReference type="InterPro" id="IPR013162">
    <property type="entry name" value="CD80_C2-set"/>
</dbReference>
<dbReference type="InterPro" id="IPR007110">
    <property type="entry name" value="Ig-like_dom"/>
</dbReference>
<dbReference type="InterPro" id="IPR036179">
    <property type="entry name" value="Ig-like_dom_sf"/>
</dbReference>
<dbReference type="InterPro" id="IPR013783">
    <property type="entry name" value="Ig-like_fold"/>
</dbReference>
<dbReference type="InterPro" id="IPR003599">
    <property type="entry name" value="Ig_sub"/>
</dbReference>
<dbReference type="InterPro" id="IPR013106">
    <property type="entry name" value="Ig_V-set"/>
</dbReference>
<dbReference type="PANTHER" id="PTHR21462:SF2">
    <property type="entry name" value="CELL SURFACE GLYCOPROTEIN CD200 RECEPTOR 2"/>
    <property type="match status" value="1"/>
</dbReference>
<dbReference type="PANTHER" id="PTHR21462">
    <property type="entry name" value="CELL SURFACE GLYCOPROTEIN OX2 RECEPTOR PRECURSOR"/>
    <property type="match status" value="1"/>
</dbReference>
<dbReference type="Pfam" id="PF08205">
    <property type="entry name" value="C2-set_2"/>
    <property type="match status" value="1"/>
</dbReference>
<dbReference type="Pfam" id="PF07686">
    <property type="entry name" value="V-set"/>
    <property type="match status" value="1"/>
</dbReference>
<dbReference type="SMART" id="SM00409">
    <property type="entry name" value="IG"/>
    <property type="match status" value="1"/>
</dbReference>
<dbReference type="SUPFAM" id="SSF48726">
    <property type="entry name" value="Immunoglobulin"/>
    <property type="match status" value="2"/>
</dbReference>
<dbReference type="PROSITE" id="PS50835">
    <property type="entry name" value="IG_LIKE"/>
    <property type="match status" value="2"/>
</dbReference>
<name>MO2R4_MOUSE</name>
<protein>
    <recommendedName>
        <fullName>Cell surface glycoprotein CD200 receptor 4</fullName>
    </recommendedName>
    <alternativeName>
        <fullName>CD200 cell surface glycoprotein receptor-like 4</fullName>
        <shortName>CD200 receptor-like 4</shortName>
    </alternativeName>
    <alternativeName>
        <fullName>CD200 cell surface glycoprotein receptor-like a</fullName>
        <shortName>CD200RLa</shortName>
    </alternativeName>
    <alternativeName>
        <fullName>Cell surface glycoprotein OX2 receptor 4</fullName>
    </alternativeName>
</protein>
<accession>Q6XJV4</accession>